<proteinExistence type="inferred from homology"/>
<gene>
    <name type="primary">quiP</name>
    <name type="ordered locus">PSPTO_4133</name>
</gene>
<sequence length="824" mass="89953">MASPALRHFLPRFGAAAAAASFLSLAGCQLGGGDPETVLPASGTFPLKGLAQNVSVRRNNMGMPLIESSTYHDALFTLGYVHAGDRIGQMLGMRLLAQGRLSEVAGADALEVDRLMRSVNLKRNASDLYNAASPRLKRFFDVYARGVNAYLFRYRDKLPADVARAGYTPEYWKPEDSALIFSLLNFSLSVNLQEELSALVLAQKVGADKLAWLLPTYPDEELPFAEADKLKGLNLSNQVTGLSDLNRIALQLSDLNMLGVAASSNWAIAPQRSRSGKSLLASDMQLPAGLNSAWSFVQIRAPKYQVSGASIAGLPLVLSGFNGKLAWSMSNVKGDNQDLFLEKIKREGNRVSYMADGKWVPAASHQETFLVKGGSPIRETVYETRHGALLNASATPPGNGLSLALQVPDFKDDKSLDAFFDLSRAPNVEKAFDTSREIRAITLNMVFADASNIGWQVTGRFPNRREGQGLLPSPGWDGKYDWDGFADSMLHPYDQDPRQGWLAAANQRTIPKGYGMQLSNSWGYPERAERIAELANSGKQDLRSTVAMQYDQTTTFAAKLKTIFQAPGMSKPLKQAIDALPEADRNNAREAFTRLMAFDGKLSATSADAALYELFLQESAKQIFLDELGPETSPAWQALVANASSSYSPQADHLLGRDDSPYWDDVKTPQKEDKPAILARSLAAAVTRGDSLLGSDHKAWQWGKLHRDNWTSANPLARQLGGGEFNRSASAAGGDHTTLNVSGFEWGKGFDARVAPSLRMIVDFSLVEPMTGMINTGQSGNPASPYYANSIEPWQKGQYMSIPLQQQNYEKGYGKQRLTLTPGK</sequence>
<feature type="signal peptide" evidence="2">
    <location>
        <begin position="1"/>
        <end position="26"/>
    </location>
</feature>
<feature type="chain" id="PRO_0000253405" description="Acyl-homoserine lactone acylase QuiP">
    <location>
        <begin position="27"/>
        <end position="824"/>
    </location>
</feature>
<feature type="chain" id="PRO_0000253406" description="Acyl-homoserine lactone acylase QuiP subunit alpha">
    <location>
        <begin position="27"/>
        <end status="unknown"/>
    </location>
</feature>
<feature type="propeptide" id="PRO_0000253407" description="Spacer peptide" evidence="1">
    <location>
        <begin status="unknown"/>
        <end position="263"/>
    </location>
</feature>
<feature type="chain" id="PRO_0000253408" description="Acyl-homoserine lactone acylase QuiP subunit beta">
    <location>
        <begin position="264"/>
        <end position="824"/>
    </location>
</feature>
<feature type="active site" description="Nucleophile" evidence="1">
    <location>
        <position position="264"/>
    </location>
</feature>
<evidence type="ECO:0000250" key="1"/>
<evidence type="ECO:0000255" key="2"/>
<evidence type="ECO:0000305" key="3"/>
<keyword id="KW-0378">Hydrolase</keyword>
<keyword id="KW-0574">Periplasm</keyword>
<keyword id="KW-0673">Quorum sensing</keyword>
<keyword id="KW-1185">Reference proteome</keyword>
<keyword id="KW-0732">Signal</keyword>
<keyword id="KW-0865">Zymogen</keyword>
<comment type="function">
    <text evidence="1">Catalyzes the deacylation of acyl-homoserine lactone (AHL or acyl-HSL), releasing homoserine lactone (HSL) and the corresponding fatty acid. Possesses a specificity for the degradation of long-chain acyl-HSLs (side chains of seven or more carbons in length) (By similarity).</text>
</comment>
<comment type="catalytic activity">
    <reaction>
        <text>an N-acyl-L-homoserine lactone + H2O = L-homoserine lactone + a carboxylate</text>
        <dbReference type="Rhea" id="RHEA:18937"/>
        <dbReference type="ChEBI" id="CHEBI:15377"/>
        <dbReference type="ChEBI" id="CHEBI:29067"/>
        <dbReference type="ChEBI" id="CHEBI:55474"/>
        <dbReference type="ChEBI" id="CHEBI:58633"/>
        <dbReference type="EC" id="3.5.1.97"/>
    </reaction>
</comment>
<comment type="subunit">
    <text evidence="1">Heterodimer of an alpha subunit and a beta subunit processed from the same precursor.</text>
</comment>
<comment type="subcellular location">
    <subcellularLocation>
        <location evidence="3">Periplasm</location>
    </subcellularLocation>
</comment>
<comment type="miscellaneous">
    <text>AHL-mediated signaling mediates quorum sensing in many species of Proteobacteria, regulating hundreds of genes, including many that code for extracellular virulence factors.</text>
</comment>
<comment type="similarity">
    <text evidence="3">Belongs to the peptidase S45 family.</text>
</comment>
<protein>
    <recommendedName>
        <fullName>Acyl-homoserine lactone acylase QuiP</fullName>
        <shortName>AHL acylase QuiP</shortName>
        <shortName>Acyl-HSL acylase QuiP</shortName>
        <ecNumber>3.5.1.97</ecNumber>
    </recommendedName>
    <component>
        <recommendedName>
            <fullName>Acyl-homoserine lactone acylase QuiP subunit alpha</fullName>
            <shortName>Acyl-HSL acylase QuiP subunit alpha</shortName>
        </recommendedName>
    </component>
    <component>
        <recommendedName>
            <fullName>Acyl-homoserine lactone acylase QuiP subunit beta</fullName>
            <shortName>Acyl-HSL acylase QuiP subunit beta</shortName>
        </recommendedName>
    </component>
</protein>
<name>QUIP_PSESM</name>
<accession>Q87XP3</accession>
<dbReference type="EC" id="3.5.1.97"/>
<dbReference type="EMBL" id="AE016853">
    <property type="protein sequence ID" value="AAO57589.1"/>
    <property type="molecule type" value="Genomic_DNA"/>
</dbReference>
<dbReference type="RefSeq" id="NP_793894.1">
    <property type="nucleotide sequence ID" value="NC_004578.1"/>
</dbReference>
<dbReference type="RefSeq" id="WP_011104884.1">
    <property type="nucleotide sequence ID" value="NC_004578.1"/>
</dbReference>
<dbReference type="SMR" id="Q87XP3"/>
<dbReference type="STRING" id="223283.PSPTO_4133"/>
<dbReference type="MEROPS" id="S45.003"/>
<dbReference type="GeneID" id="1185813"/>
<dbReference type="KEGG" id="pst:PSPTO_4133"/>
<dbReference type="PATRIC" id="fig|223283.9.peg.4243"/>
<dbReference type="eggNOG" id="COG2366">
    <property type="taxonomic scope" value="Bacteria"/>
</dbReference>
<dbReference type="HOGENOM" id="CLU_011790_0_1_6"/>
<dbReference type="OrthoDB" id="9760084at2"/>
<dbReference type="PhylomeDB" id="Q87XP3"/>
<dbReference type="Proteomes" id="UP000002515">
    <property type="component" value="Chromosome"/>
</dbReference>
<dbReference type="GO" id="GO:0042597">
    <property type="term" value="C:periplasmic space"/>
    <property type="evidence" value="ECO:0007669"/>
    <property type="project" value="UniProtKB-SubCell"/>
</dbReference>
<dbReference type="GO" id="GO:0016811">
    <property type="term" value="F:hydrolase activity, acting on carbon-nitrogen (but not peptide) bonds, in linear amides"/>
    <property type="evidence" value="ECO:0007669"/>
    <property type="project" value="InterPro"/>
</dbReference>
<dbReference type="GO" id="GO:0017000">
    <property type="term" value="P:antibiotic biosynthetic process"/>
    <property type="evidence" value="ECO:0007669"/>
    <property type="project" value="InterPro"/>
</dbReference>
<dbReference type="GO" id="GO:0009372">
    <property type="term" value="P:quorum sensing"/>
    <property type="evidence" value="ECO:0007669"/>
    <property type="project" value="UniProtKB-KW"/>
</dbReference>
<dbReference type="CDD" id="cd03747">
    <property type="entry name" value="Ntn_PGA_like"/>
    <property type="match status" value="1"/>
</dbReference>
<dbReference type="Gene3D" id="1.10.1400.10">
    <property type="match status" value="1"/>
</dbReference>
<dbReference type="Gene3D" id="2.30.120.10">
    <property type="match status" value="1"/>
</dbReference>
<dbReference type="Gene3D" id="3.60.20.10">
    <property type="entry name" value="Glutamine Phosphoribosylpyrophosphate, subunit 1, domain 1"/>
    <property type="match status" value="1"/>
</dbReference>
<dbReference type="Gene3D" id="1.10.439.10">
    <property type="entry name" value="Penicillin Amidohydrolase, domain 1"/>
    <property type="match status" value="1"/>
</dbReference>
<dbReference type="InterPro" id="IPR029055">
    <property type="entry name" value="Ntn_hydrolases_N"/>
</dbReference>
<dbReference type="InterPro" id="IPR014395">
    <property type="entry name" value="Pen/GL7ACA/AHL_acylase"/>
</dbReference>
<dbReference type="InterPro" id="IPR043147">
    <property type="entry name" value="Penicillin_amidase_A-knob"/>
</dbReference>
<dbReference type="InterPro" id="IPR023343">
    <property type="entry name" value="Penicillin_amidase_dom1"/>
</dbReference>
<dbReference type="InterPro" id="IPR043146">
    <property type="entry name" value="Penicillin_amidase_N_B-knob"/>
</dbReference>
<dbReference type="InterPro" id="IPR002692">
    <property type="entry name" value="S45"/>
</dbReference>
<dbReference type="PANTHER" id="PTHR34218:SF4">
    <property type="entry name" value="ACYL-HOMOSERINE LACTONE ACYLASE QUIP"/>
    <property type="match status" value="1"/>
</dbReference>
<dbReference type="PANTHER" id="PTHR34218">
    <property type="entry name" value="PEPTIDASE S45 PENICILLIN AMIDASE"/>
    <property type="match status" value="1"/>
</dbReference>
<dbReference type="Pfam" id="PF01804">
    <property type="entry name" value="Penicil_amidase"/>
    <property type="match status" value="1"/>
</dbReference>
<dbReference type="PIRSF" id="PIRSF001227">
    <property type="entry name" value="Pen_acylase"/>
    <property type="match status" value="1"/>
</dbReference>
<dbReference type="SUPFAM" id="SSF56235">
    <property type="entry name" value="N-terminal nucleophile aminohydrolases (Ntn hydrolases)"/>
    <property type="match status" value="1"/>
</dbReference>
<reference key="1">
    <citation type="journal article" date="2003" name="Proc. Natl. Acad. Sci. U.S.A.">
        <title>The complete genome sequence of the Arabidopsis and tomato pathogen Pseudomonas syringae pv. tomato DC3000.</title>
        <authorList>
            <person name="Buell C.R."/>
            <person name="Joardar V."/>
            <person name="Lindeberg M."/>
            <person name="Selengut J."/>
            <person name="Paulsen I.T."/>
            <person name="Gwinn M.L."/>
            <person name="Dodson R.J."/>
            <person name="DeBoy R.T."/>
            <person name="Durkin A.S."/>
            <person name="Kolonay J.F."/>
            <person name="Madupu R."/>
            <person name="Daugherty S.C."/>
            <person name="Brinkac L.M."/>
            <person name="Beanan M.J."/>
            <person name="Haft D.H."/>
            <person name="Nelson W.C."/>
            <person name="Davidsen T.M."/>
            <person name="Zafar N."/>
            <person name="Zhou L."/>
            <person name="Liu J."/>
            <person name="Yuan Q."/>
            <person name="Khouri H.M."/>
            <person name="Fedorova N.B."/>
            <person name="Tran B."/>
            <person name="Russell D."/>
            <person name="Berry K.J."/>
            <person name="Utterback T.R."/>
            <person name="Van Aken S.E."/>
            <person name="Feldblyum T.V."/>
            <person name="D'Ascenzo M."/>
            <person name="Deng W.-L."/>
            <person name="Ramos A.R."/>
            <person name="Alfano J.R."/>
            <person name="Cartinhour S."/>
            <person name="Chatterjee A.K."/>
            <person name="Delaney T.P."/>
            <person name="Lazarowitz S.G."/>
            <person name="Martin G.B."/>
            <person name="Schneider D.J."/>
            <person name="Tang X."/>
            <person name="Bender C.L."/>
            <person name="White O."/>
            <person name="Fraser C.M."/>
            <person name="Collmer A."/>
        </authorList>
    </citation>
    <scope>NUCLEOTIDE SEQUENCE [LARGE SCALE GENOMIC DNA]</scope>
    <source>
        <strain>ATCC BAA-871 / DC3000</strain>
    </source>
</reference>
<organism>
    <name type="scientific">Pseudomonas syringae pv. tomato (strain ATCC BAA-871 / DC3000)</name>
    <dbReference type="NCBI Taxonomy" id="223283"/>
    <lineage>
        <taxon>Bacteria</taxon>
        <taxon>Pseudomonadati</taxon>
        <taxon>Pseudomonadota</taxon>
        <taxon>Gammaproteobacteria</taxon>
        <taxon>Pseudomonadales</taxon>
        <taxon>Pseudomonadaceae</taxon>
        <taxon>Pseudomonas</taxon>
    </lineage>
</organism>